<accession>A9RAH6</accession>
<organism>
    <name type="scientific">Debaryomyces hansenii (strain ATCC 36239 / CBS 767 / BCRC 21394 / JCM 1990 / NBRC 0083 / IGC 2968)</name>
    <name type="common">Yeast</name>
    <name type="synonym">Torulaspora hansenii</name>
    <dbReference type="NCBI Taxonomy" id="284592"/>
    <lineage>
        <taxon>Eukaryota</taxon>
        <taxon>Fungi</taxon>
        <taxon>Dikarya</taxon>
        <taxon>Ascomycota</taxon>
        <taxon>Saccharomycotina</taxon>
        <taxon>Pichiomycetes</taxon>
        <taxon>Debaryomycetaceae</taxon>
        <taxon>Debaryomyces</taxon>
    </lineage>
</organism>
<proteinExistence type="inferred from homology"/>
<name>AI3_DEBHA</name>
<evidence type="ECO:0000250" key="1"/>
<evidence type="ECO:0000255" key="2"/>
<evidence type="ECO:0000305" key="3"/>
<gene>
    <name type="primary">aI3</name>
</gene>
<comment type="function">
    <text evidence="1">Mitochondrial DNA endonuclease involved in intron homing.</text>
</comment>
<comment type="subcellular location">
    <subcellularLocation>
        <location>Mitochondrion</location>
    </subcellularLocation>
    <subcellularLocation>
        <location evidence="3">Membrane</location>
        <topology evidence="3">Multi-pass membrane protein</topology>
    </subcellularLocation>
</comment>
<comment type="PTM">
    <text>The mature protein may arise from proteolytic cleavage of an in-frame translation of COX1 exons 1 to 3 plus intron 3, containing the aI3 open reading frame.</text>
</comment>
<comment type="similarity">
    <text evidence="3">In the C-terminal section; belongs to the LAGLIDADG endonuclease family.</text>
</comment>
<comment type="similarity">
    <text evidence="3">In the N-terminal section; belongs to the heme-copper respiratory oxidase family.</text>
</comment>
<protein>
    <recommendedName>
        <fullName>Probable intron-encoded endonuclease aI3</fullName>
    </recommendedName>
    <component>
        <recommendedName>
            <fullName>Truncated non-functional cytochrome oxidase 1</fullName>
        </recommendedName>
    </component>
    <component>
        <recommendedName>
            <fullName>Intron-encoded endonuclease aI3</fullName>
            <ecNumber>3.1.-.-</ecNumber>
        </recommendedName>
    </component>
</protein>
<reference key="1">
    <citation type="journal article" date="2008" name="FEMS Yeast Res.">
        <title>Promiscuous DNA in the nuclear genomes of hemiascomycetous yeasts.</title>
        <authorList>
            <person name="Sacerdot C."/>
            <person name="Casaregola S."/>
            <person name="Lafontaine I."/>
            <person name="Tekaia F."/>
            <person name="Dujon B."/>
            <person name="Ozier-Kalogeropoulos O."/>
        </authorList>
    </citation>
    <scope>NUCLEOTIDE SEQUENCE [LARGE SCALE GENOMIC DNA]</scope>
    <source>
        <strain>ATCC 36239 / CBS 767 / BCRC 21394 / JCM 1990 / NBRC 0083 / IGC 2968</strain>
    </source>
</reference>
<keyword id="KW-0255">Endonuclease</keyword>
<keyword id="KW-0378">Hydrolase</keyword>
<keyword id="KW-0404">Intron homing</keyword>
<keyword id="KW-0472">Membrane</keyword>
<keyword id="KW-0496">Mitochondrion</keyword>
<keyword id="KW-0540">Nuclease</keyword>
<keyword id="KW-1185">Reference proteome</keyword>
<keyword id="KW-0812">Transmembrane</keyword>
<keyword id="KW-1133">Transmembrane helix</keyword>
<geneLocation type="mitochondrion"/>
<sequence length="687" mass="78619">MKQMSYVTRWLYSTSHKDIGMTYLGFGMLSAMMGTGMSVMMRMELSNGNSQFFHGNNQAFNVMMSGHALLMMFFFIMPVWMGAFGNFFLPMLMGAADMAFARLNNISFWCLPPALVCMVCSVLMEQGAGTGFTTYPPLSSMSAHSGPSVDLAMFAMHLTSMSSLLGAMNFMVTVLNMRTMGLHMVNMPLFAWAMFLTAMLLLLSLPVLTAAVTLLLMDRNFNTGFYEVGAGGDPVTYEHLFWFFGHPEVYILMMPGFGVMSHMVSTYSKKPMFGEMGMLYAMGSIGFLGFLVWSHHMFVVGLDIDSRAYFTSATMVIAVPTGIKIFSWLATIYGGELRLGVPMLFALGFLFLFTMGGLTGVMTSNASMDVAFHDRIFIYYVSFFLYTLYNMYNNYTNNNTAHKGRHCANASYNNDINNLVSFMDKNEYIKMFWVGLMDGDGSMQVNHWRKKNLQYRLIMKTSNLESNYNMLMLMAKVMGGTVRISKKKDNVMWVVDSKESIKDMMKMFDKYPLLTSRKMCQINFMKKCMKLNYMPAEGGYPREAGTDWYLLNRNYKYNDQLNMINTFNLKLKNKSFMNALPEGHGMHHMVKHSEYFKCWLSGFMEAEGCFSIRLNKSNSFSMGQNDDFYLMEEIKQFFNATNSVRNSYKNFYCLEIYKRIMLNNIITHCSNYPLLGEKKESLMKFLK</sequence>
<feature type="chain" id="PRO_0000355039" description="Truncated non-functional cytochrome oxidase 1">
    <location>
        <begin position="1"/>
        <end status="unknown"/>
    </location>
</feature>
<feature type="chain" id="PRO_0000355040" description="Intron-encoded endonuclease aI3">
    <location>
        <begin status="unknown"/>
        <end position="687"/>
    </location>
</feature>
<feature type="transmembrane region" description="Helical" evidence="2">
    <location>
        <begin position="19"/>
        <end position="39"/>
    </location>
</feature>
<feature type="transmembrane region" description="Helical" evidence="2">
    <location>
        <begin position="69"/>
        <end position="89"/>
    </location>
</feature>
<feature type="transmembrane region" description="Helical" evidence="2">
    <location>
        <begin position="103"/>
        <end position="123"/>
    </location>
</feature>
<feature type="transmembrane region" description="Helical" evidence="2">
    <location>
        <begin position="152"/>
        <end position="172"/>
    </location>
</feature>
<feature type="transmembrane region" description="Helical" evidence="2">
    <location>
        <begin position="188"/>
        <end position="208"/>
    </location>
</feature>
<feature type="transmembrane region" description="Helical" evidence="2">
    <location>
        <begin position="240"/>
        <end position="260"/>
    </location>
</feature>
<feature type="transmembrane region" description="Helical" evidence="2">
    <location>
        <begin position="273"/>
        <end position="293"/>
    </location>
</feature>
<feature type="transmembrane region" description="Helical" evidence="2">
    <location>
        <begin position="315"/>
        <end position="335"/>
    </location>
</feature>
<feature type="transmembrane region" description="Helical" evidence="2">
    <location>
        <begin position="341"/>
        <end position="361"/>
    </location>
</feature>
<feature type="transmembrane region" description="Helical" evidence="2">
    <location>
        <begin position="376"/>
        <end position="396"/>
    </location>
</feature>
<feature type="region of interest" description="COX1 exons 1 to 3 encoded">
    <location>
        <begin position="1"/>
        <end position="374"/>
    </location>
</feature>
<feature type="region of interest" description="COX1 intron 3 encoded">
    <location>
        <begin position="375"/>
        <end position="687"/>
    </location>
</feature>
<dbReference type="EC" id="3.1.-.-"/>
<dbReference type="EMBL" id="DQ508940">
    <property type="protein sequence ID" value="ABF58077.1"/>
    <property type="molecule type" value="Genomic_DNA"/>
</dbReference>
<dbReference type="SMR" id="A9RAH6"/>
<dbReference type="FunCoup" id="A9RAH6">
    <property type="interactions" value="612"/>
</dbReference>
<dbReference type="STRING" id="284592.A9RAH6"/>
<dbReference type="InParanoid" id="A9RAH6"/>
<dbReference type="Proteomes" id="UP000000599">
    <property type="component" value="Mitochondrion"/>
</dbReference>
<dbReference type="GO" id="GO:0016020">
    <property type="term" value="C:membrane"/>
    <property type="evidence" value="ECO:0007669"/>
    <property type="project" value="UniProtKB-SubCell"/>
</dbReference>
<dbReference type="GO" id="GO:0005739">
    <property type="term" value="C:mitochondrion"/>
    <property type="evidence" value="ECO:0007669"/>
    <property type="project" value="UniProtKB-SubCell"/>
</dbReference>
<dbReference type="GO" id="GO:0004129">
    <property type="term" value="F:cytochrome-c oxidase activity"/>
    <property type="evidence" value="ECO:0007669"/>
    <property type="project" value="InterPro"/>
</dbReference>
<dbReference type="GO" id="GO:0004519">
    <property type="term" value="F:endonuclease activity"/>
    <property type="evidence" value="ECO:0007669"/>
    <property type="project" value="UniProtKB-KW"/>
</dbReference>
<dbReference type="GO" id="GO:0020037">
    <property type="term" value="F:heme binding"/>
    <property type="evidence" value="ECO:0007669"/>
    <property type="project" value="InterPro"/>
</dbReference>
<dbReference type="GO" id="GO:0015990">
    <property type="term" value="P:electron transport coupled proton transport"/>
    <property type="evidence" value="ECO:0007669"/>
    <property type="project" value="TreeGrafter"/>
</dbReference>
<dbReference type="GO" id="GO:0006314">
    <property type="term" value="P:intron homing"/>
    <property type="evidence" value="ECO:0007669"/>
    <property type="project" value="UniProtKB-KW"/>
</dbReference>
<dbReference type="GO" id="GO:0006123">
    <property type="term" value="P:mitochondrial electron transport, cytochrome c to oxygen"/>
    <property type="evidence" value="ECO:0007669"/>
    <property type="project" value="TreeGrafter"/>
</dbReference>
<dbReference type="Gene3D" id="1.20.210.10">
    <property type="entry name" value="Cytochrome c oxidase-like, subunit I domain"/>
    <property type="match status" value="1"/>
</dbReference>
<dbReference type="Gene3D" id="3.10.28.10">
    <property type="entry name" value="Homing endonucleases"/>
    <property type="match status" value="2"/>
</dbReference>
<dbReference type="InterPro" id="IPR023616">
    <property type="entry name" value="Cyt_c_oxase-like_su1_dom"/>
</dbReference>
<dbReference type="InterPro" id="IPR036927">
    <property type="entry name" value="Cyt_c_oxase-like_su1_sf"/>
</dbReference>
<dbReference type="InterPro" id="IPR000883">
    <property type="entry name" value="Cyt_C_Oxase_1"/>
</dbReference>
<dbReference type="InterPro" id="IPR023615">
    <property type="entry name" value="Cyt_c_Oxase_su1_BS"/>
</dbReference>
<dbReference type="InterPro" id="IPR027434">
    <property type="entry name" value="Homing_endonucl"/>
</dbReference>
<dbReference type="InterPro" id="IPR004860">
    <property type="entry name" value="LAGLIDADG_dom"/>
</dbReference>
<dbReference type="PANTHER" id="PTHR10422">
    <property type="entry name" value="CYTOCHROME C OXIDASE SUBUNIT 1"/>
    <property type="match status" value="1"/>
</dbReference>
<dbReference type="PANTHER" id="PTHR10422:SF18">
    <property type="entry name" value="CYTOCHROME C OXIDASE SUBUNIT 1"/>
    <property type="match status" value="1"/>
</dbReference>
<dbReference type="Pfam" id="PF00115">
    <property type="entry name" value="COX1"/>
    <property type="match status" value="1"/>
</dbReference>
<dbReference type="Pfam" id="PF00961">
    <property type="entry name" value="LAGLIDADG_1"/>
    <property type="match status" value="2"/>
</dbReference>
<dbReference type="PRINTS" id="PR01165">
    <property type="entry name" value="CYCOXIDASEI"/>
</dbReference>
<dbReference type="SUPFAM" id="SSF81442">
    <property type="entry name" value="Cytochrome c oxidase subunit I-like"/>
    <property type="match status" value="1"/>
</dbReference>
<dbReference type="SUPFAM" id="SSF55608">
    <property type="entry name" value="Homing endonucleases"/>
    <property type="match status" value="2"/>
</dbReference>
<dbReference type="PROSITE" id="PS50855">
    <property type="entry name" value="COX1"/>
    <property type="match status" value="1"/>
</dbReference>
<dbReference type="PROSITE" id="PS00077">
    <property type="entry name" value="COX1_CUB"/>
    <property type="match status" value="1"/>
</dbReference>